<comment type="function">
    <text evidence="2 3 6 7">Cleaves and degrades bioactive peptides, including angiotensin, Leu-enkephalin and Met-enkephalin (PubMed:1515063, PubMed:3233187). Also cleaves Arg-Arg-beta-naphthylamide (in vitro) (PubMed:11209758, PubMed:3233187, PubMed:9425109).</text>
</comment>
<comment type="catalytic activity">
    <reaction evidence="2 3 6 7">
        <text>Release of an N-terminal dipeptide from a peptide comprising four or more residues, with broad specificity. Also acts on dipeptidyl 2-naphthylamides.</text>
        <dbReference type="EC" id="3.4.14.4"/>
    </reaction>
</comment>
<comment type="cofactor">
    <cofactor evidence="2 5 7">
        <name>Zn(2+)</name>
        <dbReference type="ChEBI" id="CHEBI:29105"/>
    </cofactor>
    <text evidence="5">Binds 1 zinc ion per subunit.</text>
</comment>
<comment type="activity regulation">
    <text evidence="2 3 6 7">Activated by Co(2+). Inhibited by EDTA and o-phenanthroline (in vitro).</text>
</comment>
<comment type="biophysicochemical properties">
    <phDependence>
        <text evidence="2 6 7">Optimum pH is 8.8.</text>
    </phDependence>
</comment>
<comment type="interaction">
    <interactant intactId="EBI-718333">
        <id>Q9NY33</id>
    </interactant>
    <interactant intactId="EBI-751001">
        <id>Q14145</id>
        <label>KEAP1</label>
    </interactant>
    <organismsDiffer>false</organismsDiffer>
    <experiments>13</experiments>
</comment>
<comment type="subcellular location">
    <subcellularLocation>
        <location evidence="3 6">Cytoplasm</location>
        <location evidence="3 6">Cytosol</location>
    </subcellularLocation>
</comment>
<comment type="alternative products">
    <event type="alternative splicing"/>
    <isoform>
        <id>Q9NY33-1</id>
        <name>1</name>
        <sequence type="displayed"/>
    </isoform>
    <isoform>
        <id>Q9NY33-2</id>
        <name>2</name>
        <sequence type="described" ref="VSP_005510"/>
    </isoform>
    <isoform>
        <id>Q8NFJ9-2</id>
        <name>3</name>
        <name>DPP3-BBS1</name>
        <sequence type="external"/>
    </isoform>
    <isoform>
        <id>Q9NY33-4</id>
        <name>4</name>
        <sequence type="described" ref="VSP_044696"/>
    </isoform>
</comment>
<comment type="tissue specificity">
    <text evidence="3 6">Detected in placenta (at protein level) (PubMed:3233187). Detected in erythrocytes (at protein level) (PubMed:1515063).</text>
</comment>
<comment type="mass spectrometry" mass="82500.0" error="60.0" method="MALDI" evidence="2"/>
<comment type="miscellaneous">
    <molecule>Isoform 2</molecule>
    <text evidence="10">May be produced at very low levels due to a premature stop codon in the mRNA, leading to nonsense-mediated mRNA decay.</text>
</comment>
<comment type="similarity">
    <text evidence="10">Belongs to the peptidase M49 family.</text>
</comment>
<accession>Q9NY33</accession>
<accession>B2RDB5</accession>
<accession>B4DLX4</accession>
<accession>F5H8L6</accession>
<accession>O95748</accession>
<accession>Q969H2</accession>
<accession>Q9BV67</accession>
<accession>Q9HAL6</accession>
<organism>
    <name type="scientific">Homo sapiens</name>
    <name type="common">Human</name>
    <dbReference type="NCBI Taxonomy" id="9606"/>
    <lineage>
        <taxon>Eukaryota</taxon>
        <taxon>Metazoa</taxon>
        <taxon>Chordata</taxon>
        <taxon>Craniata</taxon>
        <taxon>Vertebrata</taxon>
        <taxon>Euteleostomi</taxon>
        <taxon>Mammalia</taxon>
        <taxon>Eutheria</taxon>
        <taxon>Euarchontoglires</taxon>
        <taxon>Primates</taxon>
        <taxon>Haplorrhini</taxon>
        <taxon>Catarrhini</taxon>
        <taxon>Hominidae</taxon>
        <taxon>Homo</taxon>
    </lineage>
</organism>
<reference key="1">
    <citation type="submission" date="2000-01" db="EMBL/GenBank/DDBJ databases">
        <title>Cloning and sequencing of human dipeptidyl-peptidase III.</title>
        <authorList>
            <person name="Chen J.M."/>
            <person name="Fortunato M."/>
            <person name="Barrett A.J."/>
        </authorList>
    </citation>
    <scope>NUCLEOTIDE SEQUENCE [MRNA] (ISOFORM 1)</scope>
    <scope>VARIANTS HIS-145 AND HIS-678</scope>
</reference>
<reference key="2">
    <citation type="journal article" date="2004" name="Nat. Genet.">
        <title>Complete sequencing and characterization of 21,243 full-length human cDNAs.</title>
        <authorList>
            <person name="Ota T."/>
            <person name="Suzuki Y."/>
            <person name="Nishikawa T."/>
            <person name="Otsuki T."/>
            <person name="Sugiyama T."/>
            <person name="Irie R."/>
            <person name="Wakamatsu A."/>
            <person name="Hayashi K."/>
            <person name="Sato H."/>
            <person name="Nagai K."/>
            <person name="Kimura K."/>
            <person name="Makita H."/>
            <person name="Sekine M."/>
            <person name="Obayashi M."/>
            <person name="Nishi T."/>
            <person name="Shibahara T."/>
            <person name="Tanaka T."/>
            <person name="Ishii S."/>
            <person name="Yamamoto J."/>
            <person name="Saito K."/>
            <person name="Kawai Y."/>
            <person name="Isono Y."/>
            <person name="Nakamura Y."/>
            <person name="Nagahari K."/>
            <person name="Murakami K."/>
            <person name="Yasuda T."/>
            <person name="Iwayanagi T."/>
            <person name="Wagatsuma M."/>
            <person name="Shiratori A."/>
            <person name="Sudo H."/>
            <person name="Hosoiri T."/>
            <person name="Kaku Y."/>
            <person name="Kodaira H."/>
            <person name="Kondo H."/>
            <person name="Sugawara M."/>
            <person name="Takahashi M."/>
            <person name="Kanda K."/>
            <person name="Yokoi T."/>
            <person name="Furuya T."/>
            <person name="Kikkawa E."/>
            <person name="Omura Y."/>
            <person name="Abe K."/>
            <person name="Kamihara K."/>
            <person name="Katsuta N."/>
            <person name="Sato K."/>
            <person name="Tanikawa M."/>
            <person name="Yamazaki M."/>
            <person name="Ninomiya K."/>
            <person name="Ishibashi T."/>
            <person name="Yamashita H."/>
            <person name="Murakawa K."/>
            <person name="Fujimori K."/>
            <person name="Tanai H."/>
            <person name="Kimata M."/>
            <person name="Watanabe M."/>
            <person name="Hiraoka S."/>
            <person name="Chiba Y."/>
            <person name="Ishida S."/>
            <person name="Ono Y."/>
            <person name="Takiguchi S."/>
            <person name="Watanabe S."/>
            <person name="Yosida M."/>
            <person name="Hotuta T."/>
            <person name="Kusano J."/>
            <person name="Kanehori K."/>
            <person name="Takahashi-Fujii A."/>
            <person name="Hara H."/>
            <person name="Tanase T.-O."/>
            <person name="Nomura Y."/>
            <person name="Togiya S."/>
            <person name="Komai F."/>
            <person name="Hara R."/>
            <person name="Takeuchi K."/>
            <person name="Arita M."/>
            <person name="Imose N."/>
            <person name="Musashino K."/>
            <person name="Yuuki H."/>
            <person name="Oshima A."/>
            <person name="Sasaki N."/>
            <person name="Aotsuka S."/>
            <person name="Yoshikawa Y."/>
            <person name="Matsunawa H."/>
            <person name="Ichihara T."/>
            <person name="Shiohata N."/>
            <person name="Sano S."/>
            <person name="Moriya S."/>
            <person name="Momiyama H."/>
            <person name="Satoh N."/>
            <person name="Takami S."/>
            <person name="Terashima Y."/>
            <person name="Suzuki O."/>
            <person name="Nakagawa S."/>
            <person name="Senoh A."/>
            <person name="Mizoguchi H."/>
            <person name="Goto Y."/>
            <person name="Shimizu F."/>
            <person name="Wakebe H."/>
            <person name="Hishigaki H."/>
            <person name="Watanabe T."/>
            <person name="Sugiyama A."/>
            <person name="Takemoto M."/>
            <person name="Kawakami B."/>
            <person name="Yamazaki M."/>
            <person name="Watanabe K."/>
            <person name="Kumagai A."/>
            <person name="Itakura S."/>
            <person name="Fukuzumi Y."/>
            <person name="Fujimori Y."/>
            <person name="Komiyama M."/>
            <person name="Tashiro H."/>
            <person name="Tanigami A."/>
            <person name="Fujiwara T."/>
            <person name="Ono T."/>
            <person name="Yamada K."/>
            <person name="Fujii Y."/>
            <person name="Ozaki K."/>
            <person name="Hirao M."/>
            <person name="Ohmori Y."/>
            <person name="Kawabata A."/>
            <person name="Hikiji T."/>
            <person name="Kobatake N."/>
            <person name="Inagaki H."/>
            <person name="Ikema Y."/>
            <person name="Okamoto S."/>
            <person name="Okitani R."/>
            <person name="Kawakami T."/>
            <person name="Noguchi S."/>
            <person name="Itoh T."/>
            <person name="Shigeta K."/>
            <person name="Senba T."/>
            <person name="Matsumura K."/>
            <person name="Nakajima Y."/>
            <person name="Mizuno T."/>
            <person name="Morinaga M."/>
            <person name="Sasaki M."/>
            <person name="Togashi T."/>
            <person name="Oyama M."/>
            <person name="Hata H."/>
            <person name="Watanabe M."/>
            <person name="Komatsu T."/>
            <person name="Mizushima-Sugano J."/>
            <person name="Satoh T."/>
            <person name="Shirai Y."/>
            <person name="Takahashi Y."/>
            <person name="Nakagawa K."/>
            <person name="Okumura K."/>
            <person name="Nagase T."/>
            <person name="Nomura N."/>
            <person name="Kikuchi H."/>
            <person name="Masuho Y."/>
            <person name="Yamashita R."/>
            <person name="Nakai K."/>
            <person name="Yada T."/>
            <person name="Nakamura Y."/>
            <person name="Ohara O."/>
            <person name="Isogai T."/>
            <person name="Sugano S."/>
        </authorList>
    </citation>
    <scope>NUCLEOTIDE SEQUENCE [LARGE SCALE MRNA] (ISOFORMS 1; 2 AND 4)</scope>
    <source>
        <tissue>Brain</tissue>
        <tissue>Embryo</tissue>
    </source>
</reference>
<reference key="3">
    <citation type="journal article" date="2006" name="Nature">
        <title>Human chromosome 11 DNA sequence and analysis including novel gene identification.</title>
        <authorList>
            <person name="Taylor T.D."/>
            <person name="Noguchi H."/>
            <person name="Totoki Y."/>
            <person name="Toyoda A."/>
            <person name="Kuroki Y."/>
            <person name="Dewar K."/>
            <person name="Lloyd C."/>
            <person name="Itoh T."/>
            <person name="Takeda T."/>
            <person name="Kim D.-W."/>
            <person name="She X."/>
            <person name="Barlow K.F."/>
            <person name="Bloom T."/>
            <person name="Bruford E."/>
            <person name="Chang J.L."/>
            <person name="Cuomo C.A."/>
            <person name="Eichler E."/>
            <person name="FitzGerald M.G."/>
            <person name="Jaffe D.B."/>
            <person name="LaButti K."/>
            <person name="Nicol R."/>
            <person name="Park H.-S."/>
            <person name="Seaman C."/>
            <person name="Sougnez C."/>
            <person name="Yang X."/>
            <person name="Zimmer A.R."/>
            <person name="Zody M.C."/>
            <person name="Birren B.W."/>
            <person name="Nusbaum C."/>
            <person name="Fujiyama A."/>
            <person name="Hattori M."/>
            <person name="Rogers J."/>
            <person name="Lander E.S."/>
            <person name="Sakaki Y."/>
        </authorList>
    </citation>
    <scope>NUCLEOTIDE SEQUENCE [LARGE SCALE GENOMIC DNA]</scope>
</reference>
<reference key="4">
    <citation type="journal article" date="2004" name="Genome Res.">
        <title>The status, quality, and expansion of the NIH full-length cDNA project: the Mammalian Gene Collection (MGC).</title>
        <authorList>
            <consortium name="The MGC Project Team"/>
        </authorList>
    </citation>
    <scope>NUCLEOTIDE SEQUENCE [LARGE SCALE MRNA] (ISOFORM 1)</scope>
    <scope>VARIANT HIS-76</scope>
    <source>
        <tissue>Colon</tissue>
        <tissue>Kidney</tissue>
        <tissue>Placenta</tissue>
    </source>
</reference>
<reference key="5">
    <citation type="journal article" date="1998" name="Biochem. J.">
        <title>Dipeptidyl peptidase III is a zinc metallo-exopeptidase. Molecular cloning and expression.</title>
        <authorList>
            <person name="Fukasawa K."/>
            <person name="Fukusawa K.M."/>
            <person name="Kanai M."/>
            <person name="Fujii S."/>
            <person name="Hirose J."/>
            <person name="Harada M."/>
        </authorList>
    </citation>
    <scope>NUCLEOTIDE SEQUENCE [MRNA] OF 244-723 (ISOFORM 1)</scope>
    <scope>FUNCTION</scope>
    <scope>CATALYTIC ACTIVITY</scope>
    <scope>BIOPHYSICOCHEMICAL PROPERTIES</scope>
    <scope>ACTIVITY REGULATION</scope>
    <scope>VARIANT HIS-678</scope>
</reference>
<reference key="6">
    <citation type="journal article" date="1988" name="Biochem. Med. Metab. Biol.">
        <title>Human placental dipeptidyl aminopeptidase III: hydrolysis of enkephalins and its stimulation by cobaltous ion.</title>
        <authorList>
            <person name="Shimamori Y."/>
            <person name="Watanabe Y."/>
            <person name="Fujimoto Y."/>
        </authorList>
    </citation>
    <scope>FUNCTION</scope>
    <scope>CATALYTIC ACTIVITY</scope>
    <scope>ACTIVITY REGULATION</scope>
    <scope>BIOPHYSICOCHEMICAL PROPERTIES</scope>
    <scope>SUBCELLULAR LOCATION</scope>
    <scope>TISSUE SPECIFICITY</scope>
</reference>
<reference key="7">
    <citation type="journal article" date="1992" name="Biol. Chem. Hoppe-Seyler">
        <title>Basic amino acids preferring broad specificity aminopeptidase from human erythrocytes.</title>
        <authorList>
            <person name="Abramic M."/>
            <person name="Vitale L."/>
        </authorList>
    </citation>
    <scope>FUNCTION</scope>
    <scope>CATALYTIC ACTIVITY</scope>
    <scope>ACTIVITY REGULATION</scope>
    <scope>SUBCELLULAR LOCATION</scope>
    <scope>TISSUE SPECIFICITY</scope>
</reference>
<reference key="8">
    <citation type="journal article" date="2000" name="Biol. Chem.">
        <title>Human and rat dipeptidyl peptidase III: biochemical and mass spectrometric arguments for similarities and differences.</title>
        <authorList>
            <person name="Abramic M."/>
            <person name="Schleuder D."/>
            <person name="Dolovcak L."/>
            <person name="Schroeder W."/>
            <person name="Strupat K."/>
            <person name="Sagi D."/>
            <person name="Peter-Katalini J."/>
            <person name="Vitale L."/>
        </authorList>
    </citation>
    <scope>FUNCTION</scope>
    <scope>CATALYTIC ACTIVITY</scope>
    <scope>MASS SPECTROMETRY</scope>
    <scope>PARTIAL PROTEIN SEQUENCE</scope>
    <scope>BIOPHYSICOCHEMICAL PROPERTIES</scope>
    <scope>ACTIVITY REGULATION</scope>
    <source>
        <tissue>Erythrocyte</tissue>
    </source>
</reference>
<reference key="9">
    <citation type="journal article" date="2004" name="Genome Biol.">
        <title>An unappreciated role for RNA surveillance.</title>
        <authorList>
            <person name="Hillman R.T."/>
            <person name="Green R.E."/>
            <person name="Brenner S.E."/>
        </authorList>
    </citation>
    <scope>SPLICE ISOFORM(S) THAT ARE POTENTIAL NMD TARGET(S)</scope>
</reference>
<reference key="10">
    <citation type="journal article" date="2011" name="BMC Syst. Biol.">
        <title>Initial characterization of the human central proteome.</title>
        <authorList>
            <person name="Burkard T.R."/>
            <person name="Planyavsky M."/>
            <person name="Kaupe I."/>
            <person name="Breitwieser F.P."/>
            <person name="Buerckstuemmer T."/>
            <person name="Bennett K.L."/>
            <person name="Superti-Furga G."/>
            <person name="Colinge J."/>
        </authorList>
    </citation>
    <scope>IDENTIFICATION BY MASS SPECTROMETRY [LARGE SCALE ANALYSIS]</scope>
</reference>
<reference key="11">
    <citation type="journal article" date="2012" name="Mol. Cell. Proteomics">
        <title>Comparative large-scale characterisation of plant vs. mammal proteins reveals similar and idiosyncratic N-alpha acetylation features.</title>
        <authorList>
            <person name="Bienvenut W.V."/>
            <person name="Sumpton D."/>
            <person name="Martinez A."/>
            <person name="Lilla S."/>
            <person name="Espagne C."/>
            <person name="Meinnel T."/>
            <person name="Giglione C."/>
        </authorList>
    </citation>
    <scope>ACETYLATION [LARGE SCALE ANALYSIS] AT ALA-2</scope>
    <scope>CLEAVAGE OF INITIATOR METHIONINE [LARGE SCALE ANALYSIS]</scope>
    <scope>IDENTIFICATION BY MASS SPECTROMETRY [LARGE SCALE ANALYSIS]</scope>
</reference>
<reference key="12">
    <citation type="journal article" date="2012" name="Proc. Natl. Acad. Sci. U.S.A.">
        <title>N-terminal acetylome analyses and functional insights of the N-terminal acetyltransferase NatB.</title>
        <authorList>
            <person name="Van Damme P."/>
            <person name="Lasa M."/>
            <person name="Polevoda B."/>
            <person name="Gazquez C."/>
            <person name="Elosegui-Artola A."/>
            <person name="Kim D.S."/>
            <person name="De Juan-Pardo E."/>
            <person name="Demeyer K."/>
            <person name="Hole K."/>
            <person name="Larrea E."/>
            <person name="Timmerman E."/>
            <person name="Prieto J."/>
            <person name="Arnesen T."/>
            <person name="Sherman F."/>
            <person name="Gevaert K."/>
            <person name="Aldabe R."/>
        </authorList>
    </citation>
    <scope>ACETYLATION [LARGE SCALE ANALYSIS] AT ALA-2</scope>
    <scope>CLEAVAGE OF INITIATOR METHIONINE [LARGE SCALE ANALYSIS]</scope>
    <scope>IDENTIFICATION BY MASS SPECTROMETRY [LARGE SCALE ANALYSIS]</scope>
</reference>
<reference key="13">
    <citation type="journal article" date="2014" name="J. Proteomics">
        <title>An enzyme assisted RP-RPLC approach for in-depth analysis of human liver phosphoproteome.</title>
        <authorList>
            <person name="Bian Y."/>
            <person name="Song C."/>
            <person name="Cheng K."/>
            <person name="Dong M."/>
            <person name="Wang F."/>
            <person name="Huang J."/>
            <person name="Sun D."/>
            <person name="Wang L."/>
            <person name="Ye M."/>
            <person name="Zou H."/>
        </authorList>
    </citation>
    <scope>IDENTIFICATION BY MASS SPECTROMETRY [LARGE SCALE ANALYSIS]</scope>
    <source>
        <tissue>Liver</tissue>
    </source>
</reference>
<reference key="14">
    <citation type="journal article" date="2012" name="Proc. Natl. Acad. Sci. U.S.A.">
        <title>Entropy-driven binding of opioid peptides induces a large domain motion in human dipeptidyl peptidase III.</title>
        <authorList>
            <person name="Bezerra G.A."/>
            <person name="Dobrovetsky E."/>
            <person name="Viertlmayr R."/>
            <person name="Dong A."/>
            <person name="Binter A."/>
            <person name="Abramic M."/>
            <person name="Macheroux P."/>
            <person name="Dhe-Paganon S."/>
            <person name="Gruber K."/>
        </authorList>
    </citation>
    <scope>X-RAY CRYSTALLOGRAPHY (1.90 ANGSTROMS) OF 1-726 IN COMPLEX WITH ZINC AND OPIOID PEPTIDE</scope>
    <scope>COFACTOR</scope>
    <scope>ZINC-BINDING SITES</scope>
</reference>
<dbReference type="EC" id="3.4.14.4" evidence="2 3 6 7"/>
<dbReference type="EMBL" id="AJ271216">
    <property type="protein sequence ID" value="CAB72433.1"/>
    <property type="molecule type" value="mRNA"/>
</dbReference>
<dbReference type="EMBL" id="AK021449">
    <property type="protein sequence ID" value="BAB13828.1"/>
    <property type="molecule type" value="mRNA"/>
</dbReference>
<dbReference type="EMBL" id="AK297199">
    <property type="protein sequence ID" value="BAG59686.1"/>
    <property type="molecule type" value="mRNA"/>
</dbReference>
<dbReference type="EMBL" id="AK315478">
    <property type="protein sequence ID" value="BAG37862.1"/>
    <property type="molecule type" value="mRNA"/>
</dbReference>
<dbReference type="EMBL" id="AP002748">
    <property type="status" value="NOT_ANNOTATED_CDS"/>
    <property type="molecule type" value="Genomic_DNA"/>
</dbReference>
<dbReference type="EMBL" id="BC001446">
    <property type="protein sequence ID" value="AAH01446.1"/>
    <property type="molecule type" value="mRNA"/>
</dbReference>
<dbReference type="EMBL" id="BC007221">
    <property type="protein sequence ID" value="AAH07221.1"/>
    <property type="molecule type" value="mRNA"/>
</dbReference>
<dbReference type="EMBL" id="BC014038">
    <property type="protein sequence ID" value="AAH14038.1"/>
    <property type="molecule type" value="mRNA"/>
</dbReference>
<dbReference type="EMBL" id="BC024271">
    <property type="protein sequence ID" value="AAH24271.1"/>
    <property type="molecule type" value="mRNA"/>
</dbReference>
<dbReference type="EMBL" id="AB017970">
    <property type="protein sequence ID" value="BAA75785.1"/>
    <property type="molecule type" value="mRNA"/>
</dbReference>
<dbReference type="CCDS" id="CCDS58147.1">
    <molecule id="Q9NY33-4"/>
</dbReference>
<dbReference type="CCDS" id="CCDS8141.1">
    <molecule id="Q9NY33-1"/>
</dbReference>
<dbReference type="RefSeq" id="NP_001243599.1">
    <molecule id="Q9NY33-4"/>
    <property type="nucleotide sequence ID" value="NM_001256670.2"/>
</dbReference>
<dbReference type="RefSeq" id="NP_005691.2">
    <molecule id="Q9NY33-1"/>
    <property type="nucleotide sequence ID" value="NM_005700.4"/>
</dbReference>
<dbReference type="RefSeq" id="NP_569710.2">
    <molecule id="Q9NY33-1"/>
    <property type="nucleotide sequence ID" value="NM_130443.4"/>
</dbReference>
<dbReference type="PDB" id="3FVY">
    <property type="method" value="X-ray"/>
    <property type="resolution" value="1.90 A"/>
    <property type="chains" value="A=1-726"/>
</dbReference>
<dbReference type="PDB" id="3T6B">
    <property type="method" value="X-ray"/>
    <property type="resolution" value="2.40 A"/>
    <property type="chains" value="A/B=1-726"/>
</dbReference>
<dbReference type="PDB" id="3T6J">
    <property type="method" value="X-ray"/>
    <property type="resolution" value="2.98 A"/>
    <property type="chains" value="A=1-726"/>
</dbReference>
<dbReference type="PDB" id="5E2Q">
    <property type="method" value="X-ray"/>
    <property type="resolution" value="2.40 A"/>
    <property type="chains" value="A=1-726"/>
</dbReference>
<dbReference type="PDB" id="5E33">
    <property type="method" value="X-ray"/>
    <property type="resolution" value="1.84 A"/>
    <property type="chains" value="A=1-726"/>
</dbReference>
<dbReference type="PDB" id="5E3A">
    <property type="method" value="X-ray"/>
    <property type="resolution" value="2.05 A"/>
    <property type="chains" value="A=1-726"/>
</dbReference>
<dbReference type="PDB" id="5E3C">
    <property type="method" value="X-ray"/>
    <property type="resolution" value="2.77 A"/>
    <property type="chains" value="A=1-726"/>
</dbReference>
<dbReference type="PDB" id="5EGY">
    <property type="method" value="X-ray"/>
    <property type="resolution" value="2.74 A"/>
    <property type="chains" value="A=1-726"/>
</dbReference>
<dbReference type="PDB" id="5EHH">
    <property type="method" value="X-ray"/>
    <property type="resolution" value="2.38 A"/>
    <property type="chains" value="A=1-726"/>
</dbReference>
<dbReference type="PDB" id="7OUP">
    <property type="method" value="X-ray"/>
    <property type="resolution" value="2.65 A"/>
    <property type="chains" value="A=1-737"/>
</dbReference>
<dbReference type="PDBsum" id="3FVY"/>
<dbReference type="PDBsum" id="3T6B"/>
<dbReference type="PDBsum" id="3T6J"/>
<dbReference type="PDBsum" id="5E2Q"/>
<dbReference type="PDBsum" id="5E33"/>
<dbReference type="PDBsum" id="5E3A"/>
<dbReference type="PDBsum" id="5E3C"/>
<dbReference type="PDBsum" id="5EGY"/>
<dbReference type="PDBsum" id="5EHH"/>
<dbReference type="PDBsum" id="7OUP"/>
<dbReference type="SMR" id="Q9NY33"/>
<dbReference type="BioGRID" id="115383">
    <property type="interactions" value="41"/>
</dbReference>
<dbReference type="DIP" id="DIP-53793N"/>
<dbReference type="FunCoup" id="Q9NY33">
    <property type="interactions" value="1457"/>
</dbReference>
<dbReference type="IntAct" id="Q9NY33">
    <property type="interactions" value="19"/>
</dbReference>
<dbReference type="MINT" id="Q9NY33"/>
<dbReference type="STRING" id="9606.ENSP00000440502"/>
<dbReference type="BindingDB" id="Q9NY33"/>
<dbReference type="ChEMBL" id="CHEMBL4520"/>
<dbReference type="MEROPS" id="M49.001"/>
<dbReference type="GlyGen" id="Q9NY33">
    <property type="glycosylation" value="3 sites, 1 N-linked glycan (1 site), 1 O-linked glycan (1 site)"/>
</dbReference>
<dbReference type="iPTMnet" id="Q9NY33"/>
<dbReference type="MetOSite" id="Q9NY33"/>
<dbReference type="PhosphoSitePlus" id="Q9NY33"/>
<dbReference type="SwissPalm" id="Q9NY33"/>
<dbReference type="BioMuta" id="DPP3"/>
<dbReference type="DMDM" id="20532389"/>
<dbReference type="CPTAC" id="CPTAC-58"/>
<dbReference type="CPTAC" id="CPTAC-59"/>
<dbReference type="jPOST" id="Q9NY33"/>
<dbReference type="MassIVE" id="Q9NY33"/>
<dbReference type="PaxDb" id="9606-ENSP00000353701"/>
<dbReference type="PeptideAtlas" id="Q9NY33"/>
<dbReference type="ProteomicsDB" id="27822"/>
<dbReference type="ProteomicsDB" id="83159">
    <molecule id="Q9NY33-1"/>
</dbReference>
<dbReference type="ProteomicsDB" id="83160">
    <molecule id="Q9NY33-2"/>
</dbReference>
<dbReference type="Pumba" id="Q9NY33"/>
<dbReference type="Antibodypedia" id="52373">
    <property type="antibodies" value="447 antibodies from 33 providers"/>
</dbReference>
<dbReference type="DNASU" id="10072"/>
<dbReference type="Ensembl" id="ENST00000530165.5">
    <molecule id="Q9NY33-4"/>
    <property type="protein sequence ID" value="ENSP00000436941.1"/>
    <property type="gene ID" value="ENSG00000254986.8"/>
</dbReference>
<dbReference type="Ensembl" id="ENST00000531863.6">
    <molecule id="Q9NY33-1"/>
    <property type="protein sequence ID" value="ENSP00000432782.2"/>
    <property type="gene ID" value="ENSG00000254986.8"/>
</dbReference>
<dbReference type="Ensembl" id="ENST00000541961.5">
    <molecule id="Q9NY33-1"/>
    <property type="protein sequence ID" value="ENSP00000440502.1"/>
    <property type="gene ID" value="ENSG00000254986.8"/>
</dbReference>
<dbReference type="GeneID" id="10072"/>
<dbReference type="KEGG" id="hsa:10072"/>
<dbReference type="MANE-Select" id="ENST00000531863.6">
    <property type="protein sequence ID" value="ENSP00000432782.2"/>
    <property type="RefSeq nucleotide sequence ID" value="NM_130443.4"/>
    <property type="RefSeq protein sequence ID" value="NP_569710.2"/>
</dbReference>
<dbReference type="UCSC" id="uc010rpe.3">
    <molecule id="Q9NY33-1"/>
    <property type="organism name" value="human"/>
</dbReference>
<dbReference type="AGR" id="HGNC:3008"/>
<dbReference type="CTD" id="10072"/>
<dbReference type="DisGeNET" id="10072"/>
<dbReference type="GeneCards" id="DPP3"/>
<dbReference type="HGNC" id="HGNC:3008">
    <property type="gene designation" value="DPP3"/>
</dbReference>
<dbReference type="HPA" id="ENSG00000254986">
    <property type="expression patterns" value="Low tissue specificity"/>
</dbReference>
<dbReference type="MIM" id="606818">
    <property type="type" value="gene"/>
</dbReference>
<dbReference type="neXtProt" id="NX_Q9NY33"/>
<dbReference type="OpenTargets" id="ENSG00000254986"/>
<dbReference type="PharmGKB" id="PA27466"/>
<dbReference type="VEuPathDB" id="HostDB:ENSG00000254986"/>
<dbReference type="eggNOG" id="KOG3675">
    <property type="taxonomic scope" value="Eukaryota"/>
</dbReference>
<dbReference type="GeneTree" id="ENSGT00390000007335"/>
<dbReference type="HOGENOM" id="CLU_011977_0_0_1"/>
<dbReference type="InParanoid" id="Q9NY33"/>
<dbReference type="OrthoDB" id="4694525at2759"/>
<dbReference type="PAN-GO" id="Q9NY33">
    <property type="GO annotations" value="2 GO annotations based on evolutionary models"/>
</dbReference>
<dbReference type="PhylomeDB" id="Q9NY33"/>
<dbReference type="TreeFam" id="TF300598"/>
<dbReference type="BRENDA" id="3.4.14.4">
    <property type="organism ID" value="2681"/>
</dbReference>
<dbReference type="PathwayCommons" id="Q9NY33"/>
<dbReference type="Reactome" id="R-HSA-8951664">
    <property type="pathway name" value="Neddylation"/>
</dbReference>
<dbReference type="Reactome" id="R-HSA-9755511">
    <property type="pathway name" value="KEAP1-NFE2L2 pathway"/>
</dbReference>
<dbReference type="SignaLink" id="Q9NY33"/>
<dbReference type="SIGNOR" id="Q9NY33"/>
<dbReference type="BioGRID-ORCS" id="10072">
    <property type="hits" value="31 hits in 1154 CRISPR screens"/>
</dbReference>
<dbReference type="ChiTaRS" id="DPP3">
    <property type="organism name" value="human"/>
</dbReference>
<dbReference type="EvolutionaryTrace" id="Q9NY33"/>
<dbReference type="GeneWiki" id="DPP3"/>
<dbReference type="GenomeRNAi" id="10072"/>
<dbReference type="Pharos" id="Q9NY33">
    <property type="development level" value="Tbio"/>
</dbReference>
<dbReference type="Proteomes" id="UP000005640">
    <property type="component" value="Chromosome 11"/>
</dbReference>
<dbReference type="RNAct" id="Q9NY33">
    <property type="molecule type" value="protein"/>
</dbReference>
<dbReference type="Bgee" id="ENSG00000254986">
    <property type="expression patterns" value="Expressed in mucosa of transverse colon and 175 other cell types or tissues"/>
</dbReference>
<dbReference type="ExpressionAtlas" id="Q9NY33">
    <property type="expression patterns" value="baseline and differential"/>
</dbReference>
<dbReference type="GO" id="GO:0005737">
    <property type="term" value="C:cytoplasm"/>
    <property type="evidence" value="ECO:0000318"/>
    <property type="project" value="GO_Central"/>
</dbReference>
<dbReference type="GO" id="GO:0005829">
    <property type="term" value="C:cytosol"/>
    <property type="evidence" value="ECO:0000314"/>
    <property type="project" value="HPA"/>
</dbReference>
<dbReference type="GO" id="GO:0070062">
    <property type="term" value="C:extracellular exosome"/>
    <property type="evidence" value="ECO:0007005"/>
    <property type="project" value="UniProtKB"/>
</dbReference>
<dbReference type="GO" id="GO:0004177">
    <property type="term" value="F:aminopeptidase activity"/>
    <property type="evidence" value="ECO:0007669"/>
    <property type="project" value="UniProtKB-KW"/>
</dbReference>
<dbReference type="GO" id="GO:0008239">
    <property type="term" value="F:dipeptidyl-peptidase activity"/>
    <property type="evidence" value="ECO:0000314"/>
    <property type="project" value="UniProtKB"/>
</dbReference>
<dbReference type="GO" id="GO:0008235">
    <property type="term" value="F:metalloexopeptidase activity"/>
    <property type="evidence" value="ECO:0007669"/>
    <property type="project" value="InterPro"/>
</dbReference>
<dbReference type="GO" id="GO:0008270">
    <property type="term" value="F:zinc ion binding"/>
    <property type="evidence" value="ECO:0000314"/>
    <property type="project" value="UniProtKB"/>
</dbReference>
<dbReference type="GO" id="GO:0006508">
    <property type="term" value="P:proteolysis"/>
    <property type="evidence" value="ECO:0000314"/>
    <property type="project" value="UniProtKB"/>
</dbReference>
<dbReference type="FunFam" id="3.30.540.30:FF:000001">
    <property type="entry name" value="Dipeptidyl peptidase 3"/>
    <property type="match status" value="1"/>
</dbReference>
<dbReference type="FunFam" id="3.30.540.30:FF:000002">
    <property type="entry name" value="Dipeptidyl peptidase 3"/>
    <property type="match status" value="1"/>
</dbReference>
<dbReference type="FunFam" id="3.30.540.30:FF:000003">
    <property type="entry name" value="Dipeptidyl peptidase 3"/>
    <property type="match status" value="1"/>
</dbReference>
<dbReference type="Gene3D" id="3.30.540.30">
    <property type="match status" value="3"/>
</dbReference>
<dbReference type="InterPro" id="IPR005317">
    <property type="entry name" value="Dipeptidyl-peptase3"/>
</dbReference>
<dbReference type="InterPro" id="IPR039461">
    <property type="entry name" value="Peptidase_M49"/>
</dbReference>
<dbReference type="PANTHER" id="PTHR23422:SF11">
    <property type="entry name" value="DIPEPTIDYL PEPTIDASE 3"/>
    <property type="match status" value="1"/>
</dbReference>
<dbReference type="PANTHER" id="PTHR23422">
    <property type="entry name" value="DIPEPTIDYL PEPTIDASE III-RELATED"/>
    <property type="match status" value="1"/>
</dbReference>
<dbReference type="Pfam" id="PF03571">
    <property type="entry name" value="Peptidase_M49"/>
    <property type="match status" value="1"/>
</dbReference>
<dbReference type="PIRSF" id="PIRSF007828">
    <property type="entry name" value="Dipeptidyl-peptidase_III"/>
    <property type="match status" value="1"/>
</dbReference>
<protein>
    <recommendedName>
        <fullName>Dipeptidyl peptidase 3</fullName>
        <ecNumber evidence="2 3 6 7">3.4.14.4</ecNumber>
    </recommendedName>
    <alternativeName>
        <fullName>Dipeptidyl aminopeptidase III</fullName>
    </alternativeName>
    <alternativeName>
        <fullName>Dipeptidyl arylamidase III</fullName>
    </alternativeName>
    <alternativeName>
        <fullName>Dipeptidyl peptidase III</fullName>
        <shortName>DPP III</shortName>
    </alternativeName>
    <alternativeName>
        <fullName>Enkephalinase B</fullName>
    </alternativeName>
</protein>
<name>DPP3_HUMAN</name>
<evidence type="ECO:0000250" key="1">
    <source>
        <dbReference type="UniProtKB" id="O55096"/>
    </source>
</evidence>
<evidence type="ECO:0000269" key="2">
    <source>
    </source>
</evidence>
<evidence type="ECO:0000269" key="3">
    <source>
    </source>
</evidence>
<evidence type="ECO:0000269" key="4">
    <source>
    </source>
</evidence>
<evidence type="ECO:0000269" key="5">
    <source>
    </source>
</evidence>
<evidence type="ECO:0000269" key="6">
    <source>
    </source>
</evidence>
<evidence type="ECO:0000269" key="7">
    <source>
    </source>
</evidence>
<evidence type="ECO:0000269" key="8">
    <source ref="1"/>
</evidence>
<evidence type="ECO:0000303" key="9">
    <source>
    </source>
</evidence>
<evidence type="ECO:0000305" key="10"/>
<evidence type="ECO:0007744" key="11">
    <source>
        <dbReference type="PDB" id="3FVY"/>
    </source>
</evidence>
<evidence type="ECO:0007744" key="12">
    <source>
    </source>
</evidence>
<evidence type="ECO:0007744" key="13">
    <source>
    </source>
</evidence>
<evidence type="ECO:0007829" key="14">
    <source>
        <dbReference type="PDB" id="3FVY"/>
    </source>
</evidence>
<evidence type="ECO:0007829" key="15">
    <source>
        <dbReference type="PDB" id="3T6B"/>
    </source>
</evidence>
<evidence type="ECO:0007829" key="16">
    <source>
        <dbReference type="PDB" id="3T6J"/>
    </source>
</evidence>
<evidence type="ECO:0007829" key="17">
    <source>
        <dbReference type="PDB" id="5E33"/>
    </source>
</evidence>
<evidence type="ECO:0007829" key="18">
    <source>
        <dbReference type="PDB" id="7OUP"/>
    </source>
</evidence>
<gene>
    <name type="primary">DPP3</name>
</gene>
<keyword id="KW-0002">3D-structure</keyword>
<keyword id="KW-0007">Acetylation</keyword>
<keyword id="KW-0025">Alternative splicing</keyword>
<keyword id="KW-0031">Aminopeptidase</keyword>
<keyword id="KW-0963">Cytoplasm</keyword>
<keyword id="KW-0903">Direct protein sequencing</keyword>
<keyword id="KW-0378">Hydrolase</keyword>
<keyword id="KW-0479">Metal-binding</keyword>
<keyword id="KW-0482">Metalloprotease</keyword>
<keyword id="KW-0645">Protease</keyword>
<keyword id="KW-1267">Proteomics identification</keyword>
<keyword id="KW-1185">Reference proteome</keyword>
<keyword id="KW-0862">Zinc</keyword>
<feature type="initiator methionine" description="Removed" evidence="12 13">
    <location>
        <position position="1"/>
    </location>
</feature>
<feature type="chain" id="PRO_0000078238" description="Dipeptidyl peptidase 3">
    <location>
        <begin position="2"/>
        <end position="737"/>
    </location>
</feature>
<feature type="active site" evidence="1">
    <location>
        <position position="451"/>
    </location>
</feature>
<feature type="binding site" evidence="5 11">
    <location>
        <position position="450"/>
    </location>
    <ligand>
        <name>Zn(2+)</name>
        <dbReference type="ChEBI" id="CHEBI:29105"/>
        <note>catalytic</note>
    </ligand>
</feature>
<feature type="binding site" evidence="5 11">
    <location>
        <position position="455"/>
    </location>
    <ligand>
        <name>Zn(2+)</name>
        <dbReference type="ChEBI" id="CHEBI:29105"/>
        <note>catalytic</note>
    </ligand>
</feature>
<feature type="binding site" evidence="5 11">
    <location>
        <position position="508"/>
    </location>
    <ligand>
        <name>Zn(2+)</name>
        <dbReference type="ChEBI" id="CHEBI:29105"/>
        <note>catalytic</note>
    </ligand>
</feature>
<feature type="modified residue" description="N-acetylalanine" evidence="12 13">
    <location>
        <position position="2"/>
    </location>
</feature>
<feature type="splice variant" id="VSP_044696" description="In isoform 4." evidence="9">
    <location>
        <begin position="91"/>
        <end position="120"/>
    </location>
</feature>
<feature type="splice variant" id="VSP_005510" description="In isoform 2." evidence="9">
    <location>
        <begin position="182"/>
        <end position="601"/>
    </location>
</feature>
<feature type="sequence variant" id="VAR_033494" description="In dbSNP:rs11826683." evidence="4">
    <original>R</original>
    <variation>H</variation>
    <location>
        <position position="76"/>
    </location>
</feature>
<feature type="sequence variant" id="VAR_033495" description="In dbSNP:rs11550299." evidence="8">
    <original>Q</original>
    <variation>H</variation>
    <location>
        <position position="145"/>
    </location>
</feature>
<feature type="sequence variant" id="VAR_021850" description="In dbSNP:rs2305535." evidence="7 8">
    <original>R</original>
    <variation>H</variation>
    <location>
        <position position="678"/>
    </location>
</feature>
<feature type="sequence variant" id="VAR_051597" description="In dbSNP:rs12421620.">
    <original>E</original>
    <variation>K</variation>
    <location>
        <position position="690"/>
    </location>
</feature>
<feature type="sequence conflict" description="In Ref. 2; BAG59686." evidence="10" ref="2">
    <original>P</original>
    <variation>S</variation>
    <location>
        <position position="224"/>
    </location>
</feature>
<feature type="sequence conflict" description="In Ref. 5; BAA75785." evidence="10" ref="5">
    <original>YAT</original>
    <variation>TA</variation>
    <location>
        <begin position="417"/>
        <end position="419"/>
    </location>
</feature>
<feature type="sequence conflict" description="In Ref. 5; BAA75785." evidence="10" ref="5">
    <original>I</original>
    <variation>Y</variation>
    <location>
        <position position="697"/>
    </location>
</feature>
<feature type="helix" evidence="18">
    <location>
        <begin position="4"/>
        <end position="6"/>
    </location>
</feature>
<feature type="strand" evidence="17">
    <location>
        <begin position="14"/>
        <end position="16"/>
    </location>
</feature>
<feature type="helix" evidence="17">
    <location>
        <begin position="20"/>
        <end position="25"/>
    </location>
</feature>
<feature type="helix" evidence="17">
    <location>
        <begin position="28"/>
        <end position="50"/>
    </location>
</feature>
<feature type="helix" evidence="17">
    <location>
        <begin position="56"/>
        <end position="69"/>
    </location>
</feature>
<feature type="helix" evidence="17">
    <location>
        <begin position="72"/>
        <end position="81"/>
    </location>
</feature>
<feature type="helix" evidence="17">
    <location>
        <begin position="86"/>
        <end position="102"/>
    </location>
</feature>
<feature type="strand" evidence="17">
    <location>
        <begin position="104"/>
        <end position="106"/>
    </location>
</feature>
<feature type="turn" evidence="17">
    <location>
        <begin position="108"/>
        <end position="110"/>
    </location>
</feature>
<feature type="helix" evidence="17">
    <location>
        <begin position="120"/>
        <end position="128"/>
    </location>
</feature>
<feature type="helix" evidence="17">
    <location>
        <begin position="131"/>
        <end position="135"/>
    </location>
</feature>
<feature type="helix" evidence="17">
    <location>
        <begin position="137"/>
        <end position="152"/>
    </location>
</feature>
<feature type="helix" evidence="17">
    <location>
        <begin position="156"/>
        <end position="158"/>
    </location>
</feature>
<feature type="strand" evidence="17">
    <location>
        <begin position="159"/>
        <end position="161"/>
    </location>
</feature>
<feature type="helix" evidence="14">
    <location>
        <begin position="164"/>
        <end position="166"/>
    </location>
</feature>
<feature type="strand" evidence="17">
    <location>
        <begin position="170"/>
        <end position="172"/>
    </location>
</feature>
<feature type="helix" evidence="17">
    <location>
        <begin position="178"/>
        <end position="190"/>
    </location>
</feature>
<feature type="strand" evidence="17">
    <location>
        <begin position="198"/>
        <end position="204"/>
    </location>
</feature>
<feature type="strand" evidence="16">
    <location>
        <begin position="206"/>
        <end position="208"/>
    </location>
</feature>
<feature type="strand" evidence="17">
    <location>
        <begin position="210"/>
        <end position="217"/>
    </location>
</feature>
<feature type="strand" evidence="15">
    <location>
        <begin position="222"/>
        <end position="224"/>
    </location>
</feature>
<feature type="helix" evidence="17">
    <location>
        <begin position="231"/>
        <end position="233"/>
    </location>
</feature>
<feature type="strand" evidence="17">
    <location>
        <begin position="235"/>
        <end position="239"/>
    </location>
</feature>
<feature type="strand" evidence="17">
    <location>
        <begin position="242"/>
        <end position="250"/>
    </location>
</feature>
<feature type="helix" evidence="17">
    <location>
        <begin position="252"/>
        <end position="266"/>
    </location>
</feature>
<feature type="helix" evidence="17">
    <location>
        <begin position="272"/>
        <end position="287"/>
    </location>
</feature>
<feature type="helix" evidence="17">
    <location>
        <begin position="290"/>
        <end position="302"/>
    </location>
</feature>
<feature type="strand" evidence="17">
    <location>
        <begin position="307"/>
        <end position="316"/>
    </location>
</feature>
<feature type="strand" evidence="17">
    <location>
        <begin position="318"/>
        <end position="323"/>
    </location>
</feature>
<feature type="strand" evidence="17">
    <location>
        <begin position="327"/>
        <end position="335"/>
    </location>
</feature>
<feature type="helix" evidence="17">
    <location>
        <begin position="337"/>
        <end position="346"/>
    </location>
</feature>
<feature type="helix" evidence="17">
    <location>
        <begin position="350"/>
        <end position="353"/>
    </location>
</feature>
<feature type="helix" evidence="17">
    <location>
        <begin position="354"/>
        <end position="356"/>
    </location>
</feature>
<feature type="strand" evidence="17">
    <location>
        <begin position="357"/>
        <end position="359"/>
    </location>
</feature>
<feature type="helix" evidence="17">
    <location>
        <begin position="361"/>
        <end position="363"/>
    </location>
</feature>
<feature type="strand" evidence="17">
    <location>
        <begin position="372"/>
        <end position="384"/>
    </location>
</feature>
<feature type="strand" evidence="17">
    <location>
        <begin position="388"/>
        <end position="392"/>
    </location>
</feature>
<feature type="helix" evidence="17">
    <location>
        <begin position="396"/>
        <end position="401"/>
    </location>
</feature>
<feature type="strand" evidence="17">
    <location>
        <begin position="405"/>
        <end position="409"/>
    </location>
</feature>
<feature type="helix" evidence="17">
    <location>
        <begin position="410"/>
        <end position="416"/>
    </location>
</feature>
<feature type="helix" evidence="14">
    <location>
        <begin position="421"/>
        <end position="423"/>
    </location>
</feature>
<feature type="helix" evidence="17">
    <location>
        <begin position="429"/>
        <end position="452"/>
    </location>
</feature>
<feature type="turn" evidence="17">
    <location>
        <begin position="453"/>
        <end position="456"/>
    </location>
</feature>
<feature type="strand" evidence="17">
    <location>
        <begin position="465"/>
        <end position="467"/>
    </location>
</feature>
<feature type="strand" evidence="17">
    <location>
        <begin position="469"/>
        <end position="471"/>
    </location>
</feature>
<feature type="turn" evidence="17">
    <location>
        <begin position="473"/>
        <end position="475"/>
    </location>
</feature>
<feature type="turn" evidence="17">
    <location>
        <begin position="479"/>
        <end position="481"/>
    </location>
</feature>
<feature type="strand" evidence="17">
    <location>
        <begin position="482"/>
        <end position="484"/>
    </location>
</feature>
<feature type="helix" evidence="17">
    <location>
        <begin position="495"/>
        <end position="499"/>
    </location>
</feature>
<feature type="helix" evidence="17">
    <location>
        <begin position="500"/>
        <end position="502"/>
    </location>
</feature>
<feature type="helix" evidence="17">
    <location>
        <begin position="503"/>
        <end position="518"/>
    </location>
</feature>
<feature type="helix" evidence="17">
    <location>
        <begin position="524"/>
        <end position="527"/>
    </location>
</feature>
<feature type="helix" evidence="17">
    <location>
        <begin position="533"/>
        <end position="552"/>
    </location>
</feature>
<feature type="helix" evidence="17">
    <location>
        <begin position="553"/>
        <end position="556"/>
    </location>
</feature>
<feature type="turn" evidence="17">
    <location>
        <begin position="559"/>
        <end position="562"/>
    </location>
</feature>
<feature type="strand" evidence="14">
    <location>
        <begin position="563"/>
        <end position="565"/>
    </location>
</feature>
<feature type="helix" evidence="17">
    <location>
        <begin position="567"/>
        <end position="581"/>
    </location>
</feature>
<feature type="strand" evidence="17">
    <location>
        <begin position="586"/>
        <end position="593"/>
    </location>
</feature>
<feature type="strand" evidence="17">
    <location>
        <begin position="597"/>
        <end position="605"/>
    </location>
</feature>
<feature type="helix" evidence="17">
    <location>
        <begin position="607"/>
        <end position="609"/>
    </location>
</feature>
<feature type="turn" evidence="17">
    <location>
        <begin position="610"/>
        <end position="613"/>
    </location>
</feature>
<feature type="helix" evidence="17">
    <location>
        <begin position="614"/>
        <end position="630"/>
    </location>
</feature>
<feature type="helix" evidence="17">
    <location>
        <begin position="634"/>
        <end position="644"/>
    </location>
</feature>
<feature type="turn" evidence="17">
    <location>
        <begin position="651"/>
        <end position="653"/>
    </location>
</feature>
<feature type="helix" evidence="17">
    <location>
        <begin position="655"/>
        <end position="664"/>
    </location>
</feature>
<feature type="strand" evidence="17">
    <location>
        <begin position="671"/>
        <end position="673"/>
    </location>
</feature>
<feature type="strand" evidence="17">
    <location>
        <begin position="676"/>
        <end position="680"/>
    </location>
</feature>
<feature type="strand" evidence="17">
    <location>
        <begin position="683"/>
        <end position="687"/>
    </location>
</feature>
<feature type="helix" evidence="17">
    <location>
        <begin position="693"/>
        <end position="701"/>
    </location>
</feature>
<feature type="turn" evidence="17">
    <location>
        <begin position="705"/>
        <end position="707"/>
    </location>
</feature>
<feature type="helix" evidence="17">
    <location>
        <begin position="708"/>
        <end position="721"/>
    </location>
</feature>
<feature type="helix" evidence="17">
    <location>
        <begin position="722"/>
        <end position="725"/>
    </location>
</feature>
<proteinExistence type="evidence at protein level"/>
<sequence length="737" mass="82589">MADTQYILPNDIGVSSLDCREAFRLLSPTERLYAYHLSRAAWYGGLAVLLQTSPEAPYIYALLSRLFRAQDPDQLRQHALAEGLTEEEYQAFLVYAAGVYSNMGNYKSFGDTKFVPNLPKEKLERVILGSEAAQQHPEEVRGLWQTCGELMFSLEPRLRHLGLGKEGITTYFSGNCTMEDAKLAQDFLDSQNLSAYNTRLFKEVDGEGKPYYEVRLASVLGSEPSLDSEVTSKLKSYEFRGSPFQVTRGDYAPILQKVVEQLEKAKAYAANSHQGQMLAQYIESFTQGSIEAHKRGSRFWIQDKGPIVESYIGFIESYRDPFGSRGEFEGFVAVVNKAMSAKFERLVASAEQLLKELPWPPTFEKDKFLTPDFTSLDVLTFAGSGIPAGINIPNYDDLRQTEGFKNVSLGNVLAVAYATQREKLTFLEEDDKDLYILWKGPSFDVQVGLHELLGHGSGKLFVQDEKGAFNFDQETVINPETGEQIQSWYRSGETWDSKFSTIASSYEECRAESVGLYLCLHPQVLEIFGFEGADAEDVIYVNWLNMVRAGLLALEFYTPEAFNWRQAHMQARFVILRVLLEAGEGLVTITPTTGSDGRPDARVRLDRSKIRSVGKPALERFLRRLQVLKSTGDVAGGRALYEGYATVTDAPPECFLTLRDTVLLRKESRKLIVQPNTRLEGSDVQLLEYEASAAGLIRSFSERFPEDGPELEEILTQLATADARFWKGPSEAPSGQA</sequence>